<protein>
    <recommendedName>
        <fullName evidence="1">Small ribosomal subunit protein uS8</fullName>
    </recommendedName>
    <alternativeName>
        <fullName evidence="2">30S ribosomal protein S8</fullName>
    </alternativeName>
</protein>
<accession>A0A0M9AFS9</accession>
<accession>Q5SHQ2</accession>
<feature type="chain" id="PRO_0000439214" description="Small ribosomal subunit protein uS8">
    <location>
        <begin position="1"/>
        <end position="138"/>
    </location>
</feature>
<reference key="1">
    <citation type="journal article" date="1991" name="Eur. J. Biochem.">
        <title>Analysis of the spc ribosomal protein operon of Thermus aquaticus.</title>
        <authorList>
            <person name="Jahn O."/>
            <person name="Hartmann R.K."/>
            <person name="Erdmann V.A."/>
        </authorList>
    </citation>
    <scope>NUCLEOTIDE SEQUENCE [GENOMIC DNA]</scope>
    <source>
        <strain>EP 00276</strain>
    </source>
</reference>
<reference key="2">
    <citation type="submission" date="2015-07" db="EMBL/GenBank/DDBJ databases">
        <authorList>
            <person name="Zylicz-Stachula A."/>
            <person name="Jezewska-Frackowiak J."/>
            <person name="Czajkowska E."/>
            <person name="Skowron P.M."/>
        </authorList>
    </citation>
    <scope>NUCLEOTIDE SEQUENCE [LARGE SCALE GENOMIC DNA]</scope>
    <source>
        <strain>ATCC 25104 / DSM 625 / JCM 10724 / NBRC 103206 / NCIMB 11243 / YT-1</strain>
    </source>
</reference>
<dbReference type="EMBL" id="X56552">
    <property type="protein sequence ID" value="CAA39898.1"/>
    <property type="molecule type" value="Genomic_DNA"/>
</dbReference>
<dbReference type="EMBL" id="LHCI01000106">
    <property type="protein sequence ID" value="KOX89851.1"/>
    <property type="molecule type" value="Genomic_DNA"/>
</dbReference>
<dbReference type="RefSeq" id="WP_053767572.1">
    <property type="nucleotide sequence ID" value="NZ_LHCI01000106.1"/>
</dbReference>
<dbReference type="SMR" id="A0A0M9AFS9"/>
<dbReference type="IntAct" id="A0A0M9AFS9">
    <property type="interactions" value="2"/>
</dbReference>
<dbReference type="PATRIC" id="fig|271.14.peg.1110"/>
<dbReference type="Proteomes" id="UP000037685">
    <property type="component" value="Unassembled WGS sequence"/>
</dbReference>
<dbReference type="GO" id="GO:1990904">
    <property type="term" value="C:ribonucleoprotein complex"/>
    <property type="evidence" value="ECO:0007669"/>
    <property type="project" value="UniProtKB-KW"/>
</dbReference>
<dbReference type="GO" id="GO:0005840">
    <property type="term" value="C:ribosome"/>
    <property type="evidence" value="ECO:0007669"/>
    <property type="project" value="UniProtKB-KW"/>
</dbReference>
<dbReference type="GO" id="GO:0019843">
    <property type="term" value="F:rRNA binding"/>
    <property type="evidence" value="ECO:0007669"/>
    <property type="project" value="UniProtKB-UniRule"/>
</dbReference>
<dbReference type="GO" id="GO:0003735">
    <property type="term" value="F:structural constituent of ribosome"/>
    <property type="evidence" value="ECO:0007669"/>
    <property type="project" value="InterPro"/>
</dbReference>
<dbReference type="GO" id="GO:0006412">
    <property type="term" value="P:translation"/>
    <property type="evidence" value="ECO:0007669"/>
    <property type="project" value="UniProtKB-UniRule"/>
</dbReference>
<dbReference type="FunFam" id="3.30.1370.30:FF:000002">
    <property type="entry name" value="30S ribosomal protein S8"/>
    <property type="match status" value="1"/>
</dbReference>
<dbReference type="FunFam" id="3.30.1490.10:FF:000001">
    <property type="entry name" value="30S ribosomal protein S8"/>
    <property type="match status" value="1"/>
</dbReference>
<dbReference type="Gene3D" id="3.30.1370.30">
    <property type="match status" value="1"/>
</dbReference>
<dbReference type="Gene3D" id="3.30.1490.10">
    <property type="match status" value="1"/>
</dbReference>
<dbReference type="HAMAP" id="MF_01302_B">
    <property type="entry name" value="Ribosomal_uS8_B"/>
    <property type="match status" value="1"/>
</dbReference>
<dbReference type="InterPro" id="IPR000630">
    <property type="entry name" value="Ribosomal_uS8"/>
</dbReference>
<dbReference type="InterPro" id="IPR047863">
    <property type="entry name" value="Ribosomal_uS8_CS"/>
</dbReference>
<dbReference type="InterPro" id="IPR035987">
    <property type="entry name" value="Ribosomal_uS8_sf"/>
</dbReference>
<dbReference type="NCBIfam" id="NF001109">
    <property type="entry name" value="PRK00136.1"/>
    <property type="match status" value="1"/>
</dbReference>
<dbReference type="PANTHER" id="PTHR11758">
    <property type="entry name" value="40S RIBOSOMAL PROTEIN S15A"/>
    <property type="match status" value="1"/>
</dbReference>
<dbReference type="Pfam" id="PF00410">
    <property type="entry name" value="Ribosomal_S8"/>
    <property type="match status" value="1"/>
</dbReference>
<dbReference type="SUPFAM" id="SSF56047">
    <property type="entry name" value="Ribosomal protein S8"/>
    <property type="match status" value="1"/>
</dbReference>
<dbReference type="PROSITE" id="PS00053">
    <property type="entry name" value="RIBOSOMAL_S8"/>
    <property type="match status" value="1"/>
</dbReference>
<sequence length="138" mass="15855">MLTDPIADMLTRIRNATRVYKESTEVPASRFKEEILKILAREGFIKGYERVEVDGKPYLRIHLKYGPRRQGPDPRPEQVIKHIRRISRPGRRVYVGVKEIPRVRRGLGIAILSTPKGVLTDREARKLGVGGELICEVW</sequence>
<keyword id="KW-0687">Ribonucleoprotein</keyword>
<keyword id="KW-0689">Ribosomal protein</keyword>
<keyword id="KW-0694">RNA-binding</keyword>
<keyword id="KW-0699">rRNA-binding</keyword>
<gene>
    <name evidence="1" type="primary">rpsH</name>
    <name type="ORF">BVI061214_01034</name>
</gene>
<comment type="function">
    <text evidence="1">One of the primary rRNA binding proteins, it binds directly to 16S rRNA central domain where it helps coordinate assembly of the platform of the 30S subunit.</text>
</comment>
<comment type="subunit">
    <text evidence="1">Part of the 30S ribosomal subunit. Contacts proteins S5 and S12.</text>
</comment>
<comment type="similarity">
    <text evidence="1">Belongs to the universal ribosomal protein uS8 family.</text>
</comment>
<name>RS8_THEAQ</name>
<organism>
    <name type="scientific">Thermus aquaticus</name>
    <dbReference type="NCBI Taxonomy" id="271"/>
    <lineage>
        <taxon>Bacteria</taxon>
        <taxon>Thermotogati</taxon>
        <taxon>Deinococcota</taxon>
        <taxon>Deinococci</taxon>
        <taxon>Thermales</taxon>
        <taxon>Thermaceae</taxon>
        <taxon>Thermus</taxon>
    </lineage>
</organism>
<proteinExistence type="inferred from homology"/>
<evidence type="ECO:0000255" key="1">
    <source>
        <dbReference type="HAMAP-Rule" id="MF_01302"/>
    </source>
</evidence>
<evidence type="ECO:0000305" key="2"/>